<protein>
    <recommendedName>
        <fullName>Complexin-2</fullName>
    </recommendedName>
    <alternativeName>
        <fullName>NJ-synaphin-1A</fullName>
    </alternativeName>
</protein>
<dbReference type="EMBL" id="AB004243">
    <property type="protein sequence ID" value="BAA22603.1"/>
    <property type="molecule type" value="mRNA"/>
</dbReference>
<dbReference type="SMR" id="O42105"/>
<dbReference type="GO" id="GO:0005829">
    <property type="term" value="C:cytosol"/>
    <property type="evidence" value="ECO:0007669"/>
    <property type="project" value="UniProtKB-SubCell"/>
</dbReference>
<dbReference type="GO" id="GO:0005634">
    <property type="term" value="C:nucleus"/>
    <property type="evidence" value="ECO:0007669"/>
    <property type="project" value="UniProtKB-SubCell"/>
</dbReference>
<dbReference type="GO" id="GO:0043204">
    <property type="term" value="C:perikaryon"/>
    <property type="evidence" value="ECO:0007669"/>
    <property type="project" value="UniProtKB-SubCell"/>
</dbReference>
<dbReference type="GO" id="GO:0031201">
    <property type="term" value="C:SNARE complex"/>
    <property type="evidence" value="ECO:0007669"/>
    <property type="project" value="TreeGrafter"/>
</dbReference>
<dbReference type="GO" id="GO:0043195">
    <property type="term" value="C:terminal bouton"/>
    <property type="evidence" value="ECO:0007669"/>
    <property type="project" value="TreeGrafter"/>
</dbReference>
<dbReference type="GO" id="GO:0019905">
    <property type="term" value="F:syntaxin binding"/>
    <property type="evidence" value="ECO:0007669"/>
    <property type="project" value="InterPro"/>
</dbReference>
<dbReference type="GO" id="GO:0046928">
    <property type="term" value="P:regulation of neurotransmitter secretion"/>
    <property type="evidence" value="ECO:0007669"/>
    <property type="project" value="TreeGrafter"/>
</dbReference>
<dbReference type="GO" id="GO:0016079">
    <property type="term" value="P:synaptic vesicle exocytosis"/>
    <property type="evidence" value="ECO:0007669"/>
    <property type="project" value="TreeGrafter"/>
</dbReference>
<dbReference type="CDD" id="cd22808">
    <property type="entry name" value="Complexin_NTD_CPLX_I_II"/>
    <property type="match status" value="1"/>
</dbReference>
<dbReference type="FunFam" id="1.20.5.580:FF:000001">
    <property type="entry name" value="Complexin 2"/>
    <property type="match status" value="1"/>
</dbReference>
<dbReference type="Gene3D" id="1.20.5.580">
    <property type="entry name" value="Single Helix bin"/>
    <property type="match status" value="1"/>
</dbReference>
<dbReference type="InterPro" id="IPR008849">
    <property type="entry name" value="Synaphin"/>
</dbReference>
<dbReference type="PANTHER" id="PTHR16705">
    <property type="entry name" value="COMPLEXIN"/>
    <property type="match status" value="1"/>
</dbReference>
<dbReference type="PANTHER" id="PTHR16705:SF9">
    <property type="entry name" value="COMPLEXIN-2"/>
    <property type="match status" value="1"/>
</dbReference>
<dbReference type="Pfam" id="PF05835">
    <property type="entry name" value="Synaphin"/>
    <property type="match status" value="1"/>
</dbReference>
<dbReference type="SUPFAM" id="SSF58038">
    <property type="entry name" value="SNARE fusion complex"/>
    <property type="match status" value="1"/>
</dbReference>
<organism>
    <name type="scientific">Narke japonica</name>
    <name type="common">Japanese sleeper ray</name>
    <name type="synonym">Torpedo japonica</name>
    <dbReference type="NCBI Taxonomy" id="62965"/>
    <lineage>
        <taxon>Eukaryota</taxon>
        <taxon>Metazoa</taxon>
        <taxon>Chordata</taxon>
        <taxon>Craniata</taxon>
        <taxon>Vertebrata</taxon>
        <taxon>Chondrichthyes</taxon>
        <taxon>Elasmobranchii</taxon>
        <taxon>Batoidea</taxon>
        <taxon>Torpediniformes</taxon>
        <taxon>Narkidae</taxon>
        <taxon>Narke</taxon>
    </lineage>
</organism>
<proteinExistence type="evidence at protein level"/>
<accession>O42105</accession>
<keyword id="KW-0966">Cell projection</keyword>
<keyword id="KW-0175">Coiled coil</keyword>
<keyword id="KW-0963">Cytoplasm</keyword>
<keyword id="KW-0268">Exocytosis</keyword>
<keyword id="KW-0532">Neurotransmitter transport</keyword>
<keyword id="KW-0539">Nucleus</keyword>
<keyword id="KW-0770">Synapse</keyword>
<keyword id="KW-0813">Transport</keyword>
<reference key="1">
    <citation type="journal article" date="1997" name="Neurosci. Lett.">
        <title>Molecular cloning of synaphins/complexins, cytosolic proteins involved in transmitter release, in the electric organ of an electric ray (Narke japonica).</title>
        <authorList>
            <person name="Ishizuka T."/>
            <person name="Saisu H."/>
            <person name="Suzuki T."/>
            <person name="Kirino Y."/>
            <person name="Abe T."/>
        </authorList>
    </citation>
    <scope>NUCLEOTIDE SEQUENCE [MRNA]</scope>
    <scope>TISSUE SPECIFICITY</scope>
    <scope>SUBUNIT</scope>
    <source>
        <tissue>Electric lobe</tissue>
    </source>
</reference>
<evidence type="ECO:0000250" key="1"/>
<evidence type="ECO:0000250" key="2">
    <source>
        <dbReference type="UniProtKB" id="P84087"/>
    </source>
</evidence>
<evidence type="ECO:0000255" key="3"/>
<evidence type="ECO:0000256" key="4">
    <source>
        <dbReference type="SAM" id="MobiDB-lite"/>
    </source>
</evidence>
<evidence type="ECO:0000269" key="5">
    <source>
    </source>
</evidence>
<evidence type="ECO:0000305" key="6"/>
<comment type="function">
    <text evidence="1">Positively regulates a late step in synaptic vesicle exocytosis.</text>
</comment>
<comment type="subunit">
    <text evidence="5">Binds to the SNARE core complex containing SNAP25, VAMP2 and STX1A.</text>
</comment>
<comment type="subcellular location">
    <subcellularLocation>
        <location evidence="2">Cytoplasm</location>
        <location evidence="2">Cytosol</location>
    </subcellularLocation>
    <subcellularLocation>
        <location evidence="2">Presynapse</location>
    </subcellularLocation>
    <subcellularLocation>
        <location evidence="2">Nucleus</location>
    </subcellularLocation>
    <subcellularLocation>
        <location evidence="2">Perikaryon</location>
    </subcellularLocation>
</comment>
<comment type="tissue specificity">
    <text evidence="5">Nervous system. Present in electric organ (at protein level).</text>
</comment>
<comment type="similarity">
    <text evidence="6">Belongs to the complexin/synaphin family.</text>
</comment>
<name>CPLX2_NARJA</name>
<sequence>MDFVMKQALGGATKDMGKMLGGDEEKDPDAQKKEEERQEALRQQEDERKQKHIRMETEREKVRQQIRDKYGLKKKEEKEAEEKAAMEAPIEGSLTRPKKAIPAGCGDEDEEDEESILDTVLKYLPGPLQDMFKK</sequence>
<feature type="chain" id="PRO_0000144878" description="Complexin-2">
    <location>
        <begin position="1"/>
        <end position="134"/>
    </location>
</feature>
<feature type="region of interest" description="Disordered" evidence="4">
    <location>
        <begin position="1"/>
        <end position="114"/>
    </location>
</feature>
<feature type="coiled-coil region" evidence="3">
    <location>
        <begin position="29"/>
        <end position="84"/>
    </location>
</feature>
<feature type="compositionally biased region" description="Basic and acidic residues" evidence="4">
    <location>
        <begin position="15"/>
        <end position="85"/>
    </location>
</feature>